<keyword id="KW-0456">Lyase</keyword>
<keyword id="KW-1185">Reference proteome</keyword>
<proteinExistence type="inferred from homology"/>
<feature type="chain" id="PRO_0000403245" description="Cyanate hydratase">
    <location>
        <begin position="1"/>
        <end position="154"/>
    </location>
</feature>
<feature type="active site" evidence="1">
    <location>
        <position position="100"/>
    </location>
</feature>
<feature type="active site" evidence="1">
    <location>
        <position position="103"/>
    </location>
</feature>
<feature type="active site" evidence="1">
    <location>
        <position position="126"/>
    </location>
</feature>
<organism>
    <name type="scientific">Aspergillus terreus (strain NIH 2624 / FGSC A1156)</name>
    <dbReference type="NCBI Taxonomy" id="341663"/>
    <lineage>
        <taxon>Eukaryota</taxon>
        <taxon>Fungi</taxon>
        <taxon>Dikarya</taxon>
        <taxon>Ascomycota</taxon>
        <taxon>Pezizomycotina</taxon>
        <taxon>Eurotiomycetes</taxon>
        <taxon>Eurotiomycetidae</taxon>
        <taxon>Eurotiales</taxon>
        <taxon>Aspergillaceae</taxon>
        <taxon>Aspergillus</taxon>
        <taxon>Aspergillus subgen. Circumdati</taxon>
    </lineage>
</organism>
<accession>Q0CVK8</accession>
<gene>
    <name evidence="1" type="primary">cyn1</name>
    <name type="ORF">ATEG_02276</name>
</gene>
<comment type="function">
    <text evidence="1">Catalyzes the reaction of cyanate with bicarbonate to produce ammonia and carbon dioxide.</text>
</comment>
<comment type="catalytic activity">
    <reaction evidence="1">
        <text>cyanate + hydrogencarbonate + 3 H(+) = NH4(+) + 2 CO2</text>
        <dbReference type="Rhea" id="RHEA:11120"/>
        <dbReference type="ChEBI" id="CHEBI:15378"/>
        <dbReference type="ChEBI" id="CHEBI:16526"/>
        <dbReference type="ChEBI" id="CHEBI:17544"/>
        <dbReference type="ChEBI" id="CHEBI:28938"/>
        <dbReference type="ChEBI" id="CHEBI:29195"/>
        <dbReference type="EC" id="4.2.1.104"/>
    </reaction>
</comment>
<comment type="similarity">
    <text evidence="1">Belongs to the cyanase family.</text>
</comment>
<reference key="1">
    <citation type="submission" date="2005-09" db="EMBL/GenBank/DDBJ databases">
        <title>Annotation of the Aspergillus terreus NIH2624 genome.</title>
        <authorList>
            <person name="Birren B.W."/>
            <person name="Lander E.S."/>
            <person name="Galagan J.E."/>
            <person name="Nusbaum C."/>
            <person name="Devon K."/>
            <person name="Henn M."/>
            <person name="Ma L.-J."/>
            <person name="Jaffe D.B."/>
            <person name="Butler J."/>
            <person name="Alvarez P."/>
            <person name="Gnerre S."/>
            <person name="Grabherr M."/>
            <person name="Kleber M."/>
            <person name="Mauceli E.W."/>
            <person name="Brockman W."/>
            <person name="Rounsley S."/>
            <person name="Young S.K."/>
            <person name="LaButti K."/>
            <person name="Pushparaj V."/>
            <person name="DeCaprio D."/>
            <person name="Crawford M."/>
            <person name="Koehrsen M."/>
            <person name="Engels R."/>
            <person name="Montgomery P."/>
            <person name="Pearson M."/>
            <person name="Howarth C."/>
            <person name="Larson L."/>
            <person name="Luoma S."/>
            <person name="White J."/>
            <person name="Alvarado L."/>
            <person name="Kodira C.D."/>
            <person name="Zeng Q."/>
            <person name="Oleary S."/>
            <person name="Yandava C."/>
            <person name="Denning D.W."/>
            <person name="Nierman W.C."/>
            <person name="Milne T."/>
            <person name="Madden K."/>
        </authorList>
    </citation>
    <scope>NUCLEOTIDE SEQUENCE [LARGE SCALE GENOMIC DNA]</scope>
    <source>
        <strain>NIH 2624 / FGSC A1156</strain>
    </source>
</reference>
<name>CYNS_ASPTN</name>
<protein>
    <recommendedName>
        <fullName evidence="1">Cyanate hydratase</fullName>
        <shortName evidence="1">Cyanase</shortName>
        <ecNumber evidence="1">4.2.1.104</ecNumber>
    </recommendedName>
    <alternativeName>
        <fullName evidence="1">Cyanate hydrolase</fullName>
    </alternativeName>
    <alternativeName>
        <fullName evidence="1">Cyanate lyase</fullName>
    </alternativeName>
</protein>
<evidence type="ECO:0000255" key="1">
    <source>
        <dbReference type="HAMAP-Rule" id="MF_03139"/>
    </source>
</evidence>
<dbReference type="EC" id="4.2.1.104" evidence="1"/>
<dbReference type="EMBL" id="CH476596">
    <property type="protein sequence ID" value="EAU37238.1"/>
    <property type="molecule type" value="Genomic_DNA"/>
</dbReference>
<dbReference type="RefSeq" id="XP_001211454.1">
    <property type="nucleotide sequence ID" value="XM_001211454.1"/>
</dbReference>
<dbReference type="SMR" id="Q0CVK8"/>
<dbReference type="STRING" id="341663.Q0CVK8"/>
<dbReference type="EnsemblFungi" id="EAU37238">
    <property type="protein sequence ID" value="EAU37238"/>
    <property type="gene ID" value="ATEG_02276"/>
</dbReference>
<dbReference type="GeneID" id="4316704"/>
<dbReference type="VEuPathDB" id="FungiDB:ATEG_02276"/>
<dbReference type="eggNOG" id="ENOG502S3YJ">
    <property type="taxonomic scope" value="Eukaryota"/>
</dbReference>
<dbReference type="HOGENOM" id="CLU_103452_0_0_1"/>
<dbReference type="OMA" id="YELVMIN"/>
<dbReference type="OrthoDB" id="10019422at2759"/>
<dbReference type="Proteomes" id="UP000007963">
    <property type="component" value="Unassembled WGS sequence"/>
</dbReference>
<dbReference type="GO" id="GO:0008824">
    <property type="term" value="F:cyanate hydratase activity"/>
    <property type="evidence" value="ECO:0007669"/>
    <property type="project" value="UniProtKB-UniRule"/>
</dbReference>
<dbReference type="GO" id="GO:0003677">
    <property type="term" value="F:DNA binding"/>
    <property type="evidence" value="ECO:0007669"/>
    <property type="project" value="InterPro"/>
</dbReference>
<dbReference type="GO" id="GO:0009439">
    <property type="term" value="P:cyanate metabolic process"/>
    <property type="evidence" value="ECO:0007669"/>
    <property type="project" value="UniProtKB-UniRule"/>
</dbReference>
<dbReference type="CDD" id="cd00559">
    <property type="entry name" value="Cyanase_C"/>
    <property type="match status" value="1"/>
</dbReference>
<dbReference type="Gene3D" id="3.30.1160.10">
    <property type="entry name" value="Cyanate lyase, C-terminal domain"/>
    <property type="match status" value="1"/>
</dbReference>
<dbReference type="Gene3D" id="1.10.260.40">
    <property type="entry name" value="lambda repressor-like DNA-binding domains"/>
    <property type="match status" value="1"/>
</dbReference>
<dbReference type="HAMAP" id="MF_00535">
    <property type="entry name" value="Cyanate_hydrat"/>
    <property type="match status" value="1"/>
</dbReference>
<dbReference type="InterPro" id="IPR008076">
    <property type="entry name" value="Cyanase"/>
</dbReference>
<dbReference type="InterPro" id="IPR003712">
    <property type="entry name" value="Cyanate_lyase_C"/>
</dbReference>
<dbReference type="InterPro" id="IPR036581">
    <property type="entry name" value="Cyanate_lyase_C_sf"/>
</dbReference>
<dbReference type="InterPro" id="IPR010982">
    <property type="entry name" value="Lambda_DNA-bd_dom_sf"/>
</dbReference>
<dbReference type="NCBIfam" id="TIGR00673">
    <property type="entry name" value="cynS"/>
    <property type="match status" value="1"/>
</dbReference>
<dbReference type="PANTHER" id="PTHR34186">
    <property type="entry name" value="CYANATE HYDRATASE"/>
    <property type="match status" value="1"/>
</dbReference>
<dbReference type="PANTHER" id="PTHR34186:SF2">
    <property type="entry name" value="CYANATE HYDRATASE"/>
    <property type="match status" value="1"/>
</dbReference>
<dbReference type="Pfam" id="PF02560">
    <property type="entry name" value="Cyanate_lyase"/>
    <property type="match status" value="1"/>
</dbReference>
<dbReference type="PIRSF" id="PIRSF001263">
    <property type="entry name" value="Cyanate_hydratas"/>
    <property type="match status" value="1"/>
</dbReference>
<dbReference type="PRINTS" id="PR01693">
    <property type="entry name" value="CYANASE"/>
</dbReference>
<dbReference type="SMART" id="SM01116">
    <property type="entry name" value="Cyanate_lyase"/>
    <property type="match status" value="1"/>
</dbReference>
<dbReference type="SUPFAM" id="SSF55234">
    <property type="entry name" value="Cyanase C-terminal domain"/>
    <property type="match status" value="1"/>
</dbReference>
<dbReference type="SUPFAM" id="SSF47413">
    <property type="entry name" value="lambda repressor-like DNA-binding domains"/>
    <property type="match status" value="1"/>
</dbReference>
<sequence length="154" mass="17145">MSLATLDISQHPNLPASAQTLFKAKADKKLSFEQIAQHIGRNEVAAAALFYGQAKASPEDIVKLSELLDIPTPLLEEQLSGFPDRGRSVEMPPKEPLIYRLYEIVQNYGYAYKAVLNEKFGDGIMSAISFSTKVEKETDQDGNNWAVITLRGKW</sequence>